<reference key="1">
    <citation type="submission" date="2007-02" db="EMBL/GenBank/DDBJ databases">
        <title>Complete sequence of chromosome of Shewanella baltica OS155.</title>
        <authorList>
            <consortium name="US DOE Joint Genome Institute"/>
            <person name="Copeland A."/>
            <person name="Lucas S."/>
            <person name="Lapidus A."/>
            <person name="Barry K."/>
            <person name="Detter J.C."/>
            <person name="Glavina del Rio T."/>
            <person name="Hammon N."/>
            <person name="Israni S."/>
            <person name="Dalin E."/>
            <person name="Tice H."/>
            <person name="Pitluck S."/>
            <person name="Sims D.R."/>
            <person name="Brettin T."/>
            <person name="Bruce D."/>
            <person name="Han C."/>
            <person name="Tapia R."/>
            <person name="Brainard J."/>
            <person name="Schmutz J."/>
            <person name="Larimer F."/>
            <person name="Land M."/>
            <person name="Hauser L."/>
            <person name="Kyrpides N."/>
            <person name="Mikhailova N."/>
            <person name="Brettar I."/>
            <person name="Klappenbach J."/>
            <person name="Konstantinidis K."/>
            <person name="Rodrigues J."/>
            <person name="Tiedje J."/>
            <person name="Richardson P."/>
        </authorList>
    </citation>
    <scope>NUCLEOTIDE SEQUENCE [LARGE SCALE GENOMIC DNA]</scope>
    <source>
        <strain>OS155 / ATCC BAA-1091</strain>
    </source>
</reference>
<evidence type="ECO:0000255" key="1">
    <source>
        <dbReference type="HAMAP-Rule" id="MF_01631"/>
    </source>
</evidence>
<accession>A3DAR2</accession>
<gene>
    <name evidence="1" type="primary">glmU</name>
    <name type="ordered locus">Sbal_4364</name>
</gene>
<keyword id="KW-0012">Acyltransferase</keyword>
<keyword id="KW-0133">Cell shape</keyword>
<keyword id="KW-0961">Cell wall biogenesis/degradation</keyword>
<keyword id="KW-0963">Cytoplasm</keyword>
<keyword id="KW-0460">Magnesium</keyword>
<keyword id="KW-0479">Metal-binding</keyword>
<keyword id="KW-0511">Multifunctional enzyme</keyword>
<keyword id="KW-0548">Nucleotidyltransferase</keyword>
<keyword id="KW-0573">Peptidoglycan synthesis</keyword>
<keyword id="KW-1185">Reference proteome</keyword>
<keyword id="KW-0677">Repeat</keyword>
<keyword id="KW-0808">Transferase</keyword>
<protein>
    <recommendedName>
        <fullName evidence="1">Bifunctional protein GlmU</fullName>
    </recommendedName>
    <domain>
        <recommendedName>
            <fullName evidence="1">UDP-N-acetylglucosamine pyrophosphorylase</fullName>
            <ecNumber evidence="1">2.7.7.23</ecNumber>
        </recommendedName>
        <alternativeName>
            <fullName evidence="1">N-acetylglucosamine-1-phosphate uridyltransferase</fullName>
        </alternativeName>
    </domain>
    <domain>
        <recommendedName>
            <fullName evidence="1">Glucosamine-1-phosphate N-acetyltransferase</fullName>
            <ecNumber evidence="1">2.3.1.157</ecNumber>
        </recommendedName>
    </domain>
</protein>
<comment type="function">
    <text evidence="1">Catalyzes the last two sequential reactions in the de novo biosynthetic pathway for UDP-N-acetylglucosamine (UDP-GlcNAc). The C-terminal domain catalyzes the transfer of acetyl group from acetyl coenzyme A to glucosamine-1-phosphate (GlcN-1-P) to produce N-acetylglucosamine-1-phosphate (GlcNAc-1-P), which is converted into UDP-GlcNAc by the transfer of uridine 5-monophosphate (from uridine 5-triphosphate), a reaction catalyzed by the N-terminal domain.</text>
</comment>
<comment type="catalytic activity">
    <reaction evidence="1">
        <text>alpha-D-glucosamine 1-phosphate + acetyl-CoA = N-acetyl-alpha-D-glucosamine 1-phosphate + CoA + H(+)</text>
        <dbReference type="Rhea" id="RHEA:13725"/>
        <dbReference type="ChEBI" id="CHEBI:15378"/>
        <dbReference type="ChEBI" id="CHEBI:57287"/>
        <dbReference type="ChEBI" id="CHEBI:57288"/>
        <dbReference type="ChEBI" id="CHEBI:57776"/>
        <dbReference type="ChEBI" id="CHEBI:58516"/>
        <dbReference type="EC" id="2.3.1.157"/>
    </reaction>
</comment>
<comment type="catalytic activity">
    <reaction evidence="1">
        <text>N-acetyl-alpha-D-glucosamine 1-phosphate + UTP + H(+) = UDP-N-acetyl-alpha-D-glucosamine + diphosphate</text>
        <dbReference type="Rhea" id="RHEA:13509"/>
        <dbReference type="ChEBI" id="CHEBI:15378"/>
        <dbReference type="ChEBI" id="CHEBI:33019"/>
        <dbReference type="ChEBI" id="CHEBI:46398"/>
        <dbReference type="ChEBI" id="CHEBI:57705"/>
        <dbReference type="ChEBI" id="CHEBI:57776"/>
        <dbReference type="EC" id="2.7.7.23"/>
    </reaction>
</comment>
<comment type="cofactor">
    <cofactor evidence="1">
        <name>Mg(2+)</name>
        <dbReference type="ChEBI" id="CHEBI:18420"/>
    </cofactor>
    <text evidence="1">Binds 1 Mg(2+) ion per subunit.</text>
</comment>
<comment type="pathway">
    <text evidence="1">Nucleotide-sugar biosynthesis; UDP-N-acetyl-alpha-D-glucosamine biosynthesis; N-acetyl-alpha-D-glucosamine 1-phosphate from alpha-D-glucosamine 6-phosphate (route II): step 2/2.</text>
</comment>
<comment type="pathway">
    <text evidence="1">Nucleotide-sugar biosynthesis; UDP-N-acetyl-alpha-D-glucosamine biosynthesis; UDP-N-acetyl-alpha-D-glucosamine from N-acetyl-alpha-D-glucosamine 1-phosphate: step 1/1.</text>
</comment>
<comment type="pathway">
    <text evidence="1">Bacterial outer membrane biogenesis; LPS lipid A biosynthesis.</text>
</comment>
<comment type="subunit">
    <text evidence="1">Homotrimer.</text>
</comment>
<comment type="subcellular location">
    <subcellularLocation>
        <location evidence="1">Cytoplasm</location>
    </subcellularLocation>
</comment>
<comment type="similarity">
    <text evidence="1">In the N-terminal section; belongs to the N-acetylglucosamine-1-phosphate uridyltransferase family.</text>
</comment>
<comment type="similarity">
    <text evidence="1">In the C-terminal section; belongs to the transferase hexapeptide repeat family.</text>
</comment>
<name>GLMU_SHEB5</name>
<proteinExistence type="inferred from homology"/>
<organism>
    <name type="scientific">Shewanella baltica (strain OS155 / ATCC BAA-1091)</name>
    <dbReference type="NCBI Taxonomy" id="325240"/>
    <lineage>
        <taxon>Bacteria</taxon>
        <taxon>Pseudomonadati</taxon>
        <taxon>Pseudomonadota</taxon>
        <taxon>Gammaproteobacteria</taxon>
        <taxon>Alteromonadales</taxon>
        <taxon>Shewanellaceae</taxon>
        <taxon>Shewanella</taxon>
    </lineage>
</organism>
<dbReference type="EC" id="2.7.7.23" evidence="1"/>
<dbReference type="EC" id="2.3.1.157" evidence="1"/>
<dbReference type="EMBL" id="CP000563">
    <property type="protein sequence ID" value="ABN63825.1"/>
    <property type="molecule type" value="Genomic_DNA"/>
</dbReference>
<dbReference type="RefSeq" id="WP_011848293.1">
    <property type="nucleotide sequence ID" value="NC_009052.1"/>
</dbReference>
<dbReference type="SMR" id="A3DAR2"/>
<dbReference type="STRING" id="325240.Sbal_4364"/>
<dbReference type="KEGG" id="sbl:Sbal_4364"/>
<dbReference type="HOGENOM" id="CLU_029499_15_2_6"/>
<dbReference type="OrthoDB" id="9775031at2"/>
<dbReference type="UniPathway" id="UPA00113">
    <property type="reaction ID" value="UER00532"/>
</dbReference>
<dbReference type="UniPathway" id="UPA00113">
    <property type="reaction ID" value="UER00533"/>
</dbReference>
<dbReference type="UniPathway" id="UPA00973"/>
<dbReference type="Proteomes" id="UP000001557">
    <property type="component" value="Chromosome"/>
</dbReference>
<dbReference type="GO" id="GO:0005737">
    <property type="term" value="C:cytoplasm"/>
    <property type="evidence" value="ECO:0007669"/>
    <property type="project" value="UniProtKB-SubCell"/>
</dbReference>
<dbReference type="GO" id="GO:0016020">
    <property type="term" value="C:membrane"/>
    <property type="evidence" value="ECO:0007669"/>
    <property type="project" value="GOC"/>
</dbReference>
<dbReference type="GO" id="GO:0019134">
    <property type="term" value="F:glucosamine-1-phosphate N-acetyltransferase activity"/>
    <property type="evidence" value="ECO:0007669"/>
    <property type="project" value="UniProtKB-UniRule"/>
</dbReference>
<dbReference type="GO" id="GO:0000287">
    <property type="term" value="F:magnesium ion binding"/>
    <property type="evidence" value="ECO:0007669"/>
    <property type="project" value="UniProtKB-UniRule"/>
</dbReference>
<dbReference type="GO" id="GO:0003977">
    <property type="term" value="F:UDP-N-acetylglucosamine diphosphorylase activity"/>
    <property type="evidence" value="ECO:0007669"/>
    <property type="project" value="UniProtKB-UniRule"/>
</dbReference>
<dbReference type="GO" id="GO:0000902">
    <property type="term" value="P:cell morphogenesis"/>
    <property type="evidence" value="ECO:0007669"/>
    <property type="project" value="UniProtKB-UniRule"/>
</dbReference>
<dbReference type="GO" id="GO:0071555">
    <property type="term" value="P:cell wall organization"/>
    <property type="evidence" value="ECO:0007669"/>
    <property type="project" value="UniProtKB-KW"/>
</dbReference>
<dbReference type="GO" id="GO:0009245">
    <property type="term" value="P:lipid A biosynthetic process"/>
    <property type="evidence" value="ECO:0007669"/>
    <property type="project" value="UniProtKB-UniRule"/>
</dbReference>
<dbReference type="GO" id="GO:0009252">
    <property type="term" value="P:peptidoglycan biosynthetic process"/>
    <property type="evidence" value="ECO:0007669"/>
    <property type="project" value="UniProtKB-UniRule"/>
</dbReference>
<dbReference type="GO" id="GO:0008360">
    <property type="term" value="P:regulation of cell shape"/>
    <property type="evidence" value="ECO:0007669"/>
    <property type="project" value="UniProtKB-KW"/>
</dbReference>
<dbReference type="GO" id="GO:0006048">
    <property type="term" value="P:UDP-N-acetylglucosamine biosynthetic process"/>
    <property type="evidence" value="ECO:0007669"/>
    <property type="project" value="UniProtKB-UniPathway"/>
</dbReference>
<dbReference type="CDD" id="cd02540">
    <property type="entry name" value="GT2_GlmU_N_bac"/>
    <property type="match status" value="1"/>
</dbReference>
<dbReference type="CDD" id="cd03353">
    <property type="entry name" value="LbH_GlmU_C"/>
    <property type="match status" value="1"/>
</dbReference>
<dbReference type="Gene3D" id="2.160.10.10">
    <property type="entry name" value="Hexapeptide repeat proteins"/>
    <property type="match status" value="1"/>
</dbReference>
<dbReference type="Gene3D" id="3.90.550.10">
    <property type="entry name" value="Spore Coat Polysaccharide Biosynthesis Protein SpsA, Chain A"/>
    <property type="match status" value="1"/>
</dbReference>
<dbReference type="HAMAP" id="MF_01631">
    <property type="entry name" value="GlmU"/>
    <property type="match status" value="1"/>
</dbReference>
<dbReference type="InterPro" id="IPR005882">
    <property type="entry name" value="Bifunctional_GlmU"/>
</dbReference>
<dbReference type="InterPro" id="IPR050065">
    <property type="entry name" value="GlmU-like"/>
</dbReference>
<dbReference type="InterPro" id="IPR038009">
    <property type="entry name" value="GlmU_C_LbH"/>
</dbReference>
<dbReference type="InterPro" id="IPR001451">
    <property type="entry name" value="Hexapep"/>
</dbReference>
<dbReference type="InterPro" id="IPR018357">
    <property type="entry name" value="Hexapep_transf_CS"/>
</dbReference>
<dbReference type="InterPro" id="IPR025877">
    <property type="entry name" value="MobA-like_NTP_Trfase"/>
</dbReference>
<dbReference type="InterPro" id="IPR029044">
    <property type="entry name" value="Nucleotide-diphossugar_trans"/>
</dbReference>
<dbReference type="InterPro" id="IPR011004">
    <property type="entry name" value="Trimer_LpxA-like_sf"/>
</dbReference>
<dbReference type="NCBIfam" id="TIGR01173">
    <property type="entry name" value="glmU"/>
    <property type="match status" value="1"/>
</dbReference>
<dbReference type="NCBIfam" id="NF006986">
    <property type="entry name" value="PRK09451.1"/>
    <property type="match status" value="1"/>
</dbReference>
<dbReference type="PANTHER" id="PTHR43584:SF3">
    <property type="entry name" value="BIFUNCTIONAL PROTEIN GLMU"/>
    <property type="match status" value="1"/>
</dbReference>
<dbReference type="PANTHER" id="PTHR43584">
    <property type="entry name" value="NUCLEOTIDYL TRANSFERASE"/>
    <property type="match status" value="1"/>
</dbReference>
<dbReference type="Pfam" id="PF00132">
    <property type="entry name" value="Hexapep"/>
    <property type="match status" value="2"/>
</dbReference>
<dbReference type="Pfam" id="PF12804">
    <property type="entry name" value="NTP_transf_3"/>
    <property type="match status" value="1"/>
</dbReference>
<dbReference type="SUPFAM" id="SSF53448">
    <property type="entry name" value="Nucleotide-diphospho-sugar transferases"/>
    <property type="match status" value="1"/>
</dbReference>
<dbReference type="SUPFAM" id="SSF51161">
    <property type="entry name" value="Trimeric LpxA-like enzymes"/>
    <property type="match status" value="1"/>
</dbReference>
<dbReference type="PROSITE" id="PS00101">
    <property type="entry name" value="HEXAPEP_TRANSFERASES"/>
    <property type="match status" value="1"/>
</dbReference>
<feature type="chain" id="PRO_1000056195" description="Bifunctional protein GlmU">
    <location>
        <begin position="1"/>
        <end position="460"/>
    </location>
</feature>
<feature type="region of interest" description="Pyrophosphorylase" evidence="1">
    <location>
        <begin position="1"/>
        <end position="232"/>
    </location>
</feature>
<feature type="region of interest" description="Linker" evidence="1">
    <location>
        <begin position="233"/>
        <end position="253"/>
    </location>
</feature>
<feature type="region of interest" description="N-acetyltransferase" evidence="1">
    <location>
        <begin position="254"/>
        <end position="460"/>
    </location>
</feature>
<feature type="active site" description="Proton acceptor" evidence="1">
    <location>
        <position position="366"/>
    </location>
</feature>
<feature type="binding site" evidence="1">
    <location>
        <begin position="8"/>
        <end position="11"/>
    </location>
    <ligand>
        <name>UDP-N-acetyl-alpha-D-glucosamine</name>
        <dbReference type="ChEBI" id="CHEBI:57705"/>
    </ligand>
</feature>
<feature type="binding site" evidence="1">
    <location>
        <position position="22"/>
    </location>
    <ligand>
        <name>UDP-N-acetyl-alpha-D-glucosamine</name>
        <dbReference type="ChEBI" id="CHEBI:57705"/>
    </ligand>
</feature>
<feature type="binding site" evidence="1">
    <location>
        <position position="73"/>
    </location>
    <ligand>
        <name>UDP-N-acetyl-alpha-D-glucosamine</name>
        <dbReference type="ChEBI" id="CHEBI:57705"/>
    </ligand>
</feature>
<feature type="binding site" evidence="1">
    <location>
        <begin position="78"/>
        <end position="79"/>
    </location>
    <ligand>
        <name>UDP-N-acetyl-alpha-D-glucosamine</name>
        <dbReference type="ChEBI" id="CHEBI:57705"/>
    </ligand>
</feature>
<feature type="binding site" evidence="1">
    <location>
        <begin position="100"/>
        <end position="102"/>
    </location>
    <ligand>
        <name>UDP-N-acetyl-alpha-D-glucosamine</name>
        <dbReference type="ChEBI" id="CHEBI:57705"/>
    </ligand>
</feature>
<feature type="binding site" evidence="1">
    <location>
        <position position="102"/>
    </location>
    <ligand>
        <name>Mg(2+)</name>
        <dbReference type="ChEBI" id="CHEBI:18420"/>
    </ligand>
</feature>
<feature type="binding site" evidence="1">
    <location>
        <position position="137"/>
    </location>
    <ligand>
        <name>UDP-N-acetyl-alpha-D-glucosamine</name>
        <dbReference type="ChEBI" id="CHEBI:57705"/>
    </ligand>
</feature>
<feature type="binding site" evidence="1">
    <location>
        <position position="157"/>
    </location>
    <ligand>
        <name>UDP-N-acetyl-alpha-D-glucosamine</name>
        <dbReference type="ChEBI" id="CHEBI:57705"/>
    </ligand>
</feature>
<feature type="binding site" evidence="1">
    <location>
        <position position="172"/>
    </location>
    <ligand>
        <name>UDP-N-acetyl-alpha-D-glucosamine</name>
        <dbReference type="ChEBI" id="CHEBI:57705"/>
    </ligand>
</feature>
<feature type="binding site" evidence="1">
    <location>
        <position position="230"/>
    </location>
    <ligand>
        <name>Mg(2+)</name>
        <dbReference type="ChEBI" id="CHEBI:18420"/>
    </ligand>
</feature>
<feature type="binding site" evidence="1">
    <location>
        <position position="230"/>
    </location>
    <ligand>
        <name>UDP-N-acetyl-alpha-D-glucosamine</name>
        <dbReference type="ChEBI" id="CHEBI:57705"/>
    </ligand>
</feature>
<feature type="binding site" evidence="1">
    <location>
        <position position="336"/>
    </location>
    <ligand>
        <name>UDP-N-acetyl-alpha-D-glucosamine</name>
        <dbReference type="ChEBI" id="CHEBI:57705"/>
    </ligand>
</feature>
<feature type="binding site" evidence="1">
    <location>
        <position position="354"/>
    </location>
    <ligand>
        <name>UDP-N-acetyl-alpha-D-glucosamine</name>
        <dbReference type="ChEBI" id="CHEBI:57705"/>
    </ligand>
</feature>
<feature type="binding site" evidence="1">
    <location>
        <position position="369"/>
    </location>
    <ligand>
        <name>UDP-N-acetyl-alpha-D-glucosamine</name>
        <dbReference type="ChEBI" id="CHEBI:57705"/>
    </ligand>
</feature>
<feature type="binding site" evidence="1">
    <location>
        <position position="380"/>
    </location>
    <ligand>
        <name>UDP-N-acetyl-alpha-D-glucosamine</name>
        <dbReference type="ChEBI" id="CHEBI:57705"/>
    </ligand>
</feature>
<feature type="binding site" evidence="1">
    <location>
        <position position="383"/>
    </location>
    <ligand>
        <name>acetyl-CoA</name>
        <dbReference type="ChEBI" id="CHEBI:57288"/>
    </ligand>
</feature>
<feature type="binding site" evidence="1">
    <location>
        <begin position="389"/>
        <end position="390"/>
    </location>
    <ligand>
        <name>acetyl-CoA</name>
        <dbReference type="ChEBI" id="CHEBI:57288"/>
    </ligand>
</feature>
<feature type="binding site" evidence="1">
    <location>
        <position position="408"/>
    </location>
    <ligand>
        <name>acetyl-CoA</name>
        <dbReference type="ChEBI" id="CHEBI:57288"/>
    </ligand>
</feature>
<feature type="binding site" evidence="1">
    <location>
        <position position="426"/>
    </location>
    <ligand>
        <name>acetyl-CoA</name>
        <dbReference type="ChEBI" id="CHEBI:57288"/>
    </ligand>
</feature>
<feature type="binding site" evidence="1">
    <location>
        <position position="443"/>
    </location>
    <ligand>
        <name>acetyl-CoA</name>
        <dbReference type="ChEBI" id="CHEBI:57288"/>
    </ligand>
</feature>
<sequence length="460" mass="48656">MALNVVILAAGKGTRMRSDLPKVLHPIAHKSMVQHVIDTAHKVGSDAIQLVYGYGADKLQASLGEQQLNWVLQAEQLGTGHAVAQASPHIADSDTVLILYGDVPLIQQSTLEALLAARPENGVAILTVNLGNPMGYGRIVRTPCEGQEQGKVVGIIEQKDATAEQLLINEINTGIMAVPGKQLKAWLSRLSNNNAQGEYYLTDIIAMAHADGVAIDTAQPQSAIEVEGANNRVQLAQLERAYQAREAEKLMLAGANLRDPSRIDIRGDVTVGMDVMIDINVIFEGKVTLGNNVTIGAGAILIDCEIADNAEIKPYSIIEGAKLGVAASAGPFARLRPGAELKQDAHIGNFVEVKKAVIGVGSKAGHLAYLGDAIIGDGVNIGAGTITCNYDGANKHLTVIEDNVFVGSDTQLVAPVTIGKGATLGAGSTITRDVGENELVITRVKQKHLTGWQRPVKIKK</sequence>